<evidence type="ECO:0000250" key="1">
    <source>
        <dbReference type="UniProtKB" id="O48814"/>
    </source>
</evidence>
<evidence type="ECO:0000255" key="2"/>
<evidence type="ECO:0000255" key="3">
    <source>
        <dbReference type="PROSITE-ProRule" id="PRU00159"/>
    </source>
</evidence>
<evidence type="ECO:0000255" key="4">
    <source>
        <dbReference type="PROSITE-ProRule" id="PRU10027"/>
    </source>
</evidence>
<evidence type="ECO:0000256" key="5">
    <source>
        <dbReference type="SAM" id="MobiDB-lite"/>
    </source>
</evidence>
<evidence type="ECO:0000305" key="6"/>
<organism>
    <name type="scientific">Arabidopsis thaliana</name>
    <name type="common">Mouse-ear cress</name>
    <dbReference type="NCBI Taxonomy" id="3702"/>
    <lineage>
        <taxon>Eukaryota</taxon>
        <taxon>Viridiplantae</taxon>
        <taxon>Streptophyta</taxon>
        <taxon>Embryophyta</taxon>
        <taxon>Tracheophyta</taxon>
        <taxon>Spermatophyta</taxon>
        <taxon>Magnoliopsida</taxon>
        <taxon>eudicotyledons</taxon>
        <taxon>Gunneridae</taxon>
        <taxon>Pentapetalae</taxon>
        <taxon>rosids</taxon>
        <taxon>malvids</taxon>
        <taxon>Brassicales</taxon>
        <taxon>Brassicaceae</taxon>
        <taxon>Camelineae</taxon>
        <taxon>Arabidopsis</taxon>
    </lineage>
</organism>
<comment type="catalytic activity">
    <reaction>
        <text>L-seryl-[protein] + ATP = O-phospho-L-seryl-[protein] + ADP + H(+)</text>
        <dbReference type="Rhea" id="RHEA:17989"/>
        <dbReference type="Rhea" id="RHEA-COMP:9863"/>
        <dbReference type="Rhea" id="RHEA-COMP:11604"/>
        <dbReference type="ChEBI" id="CHEBI:15378"/>
        <dbReference type="ChEBI" id="CHEBI:29999"/>
        <dbReference type="ChEBI" id="CHEBI:30616"/>
        <dbReference type="ChEBI" id="CHEBI:83421"/>
        <dbReference type="ChEBI" id="CHEBI:456216"/>
        <dbReference type="EC" id="2.7.11.1"/>
    </reaction>
</comment>
<comment type="catalytic activity">
    <reaction>
        <text>L-threonyl-[protein] + ATP = O-phospho-L-threonyl-[protein] + ADP + H(+)</text>
        <dbReference type="Rhea" id="RHEA:46608"/>
        <dbReference type="Rhea" id="RHEA-COMP:11060"/>
        <dbReference type="Rhea" id="RHEA-COMP:11605"/>
        <dbReference type="ChEBI" id="CHEBI:15378"/>
        <dbReference type="ChEBI" id="CHEBI:30013"/>
        <dbReference type="ChEBI" id="CHEBI:30616"/>
        <dbReference type="ChEBI" id="CHEBI:61977"/>
        <dbReference type="ChEBI" id="CHEBI:456216"/>
        <dbReference type="EC" id="2.7.11.1"/>
    </reaction>
</comment>
<comment type="interaction">
    <interactant intactId="EBI-17121875">
        <id>C0LGQ7</id>
    </interactant>
    <interactant intactId="EBI-16955335">
        <id>C0LGS3</id>
        <label>At4g37250</label>
    </interactant>
    <organismsDiffer>false</organismsDiffer>
    <experiments>2</experiments>
</comment>
<comment type="interaction">
    <interactant intactId="EBI-17121875">
        <id>C0LGQ7</id>
    </interactant>
    <interactant intactId="EBI-17121474">
        <id>Q93ZS4</id>
        <label>NIK3</label>
    </interactant>
    <organismsDiffer>false</organismsDiffer>
    <experiments>2</experiments>
</comment>
<comment type="interaction">
    <interactant intactId="EBI-17121875">
        <id>C0LGQ7</id>
    </interactant>
    <interactant intactId="EBI-1238200">
        <id>Q9LZV7</id>
        <label>PXC2</label>
    </interactant>
    <organismsDiffer>false</organismsDiffer>
    <experiments>2</experiments>
</comment>
<comment type="subcellular location">
    <subcellularLocation>
        <location evidence="6">Membrane</location>
        <topology evidence="6">Single-pass type I membrane protein</topology>
    </subcellularLocation>
</comment>
<comment type="similarity">
    <text evidence="3">Belongs to the protein kinase superfamily. Ser/Thr protein kinase family.</text>
</comment>
<comment type="sequence caution" evidence="6">
    <conflict type="erroneous gene model prediction">
        <sequence resource="EMBL-CDS" id="CAB45811"/>
    </conflict>
</comment>
<comment type="sequence caution" evidence="6">
    <conflict type="erroneous gene model prediction">
        <sequence resource="EMBL-CDS" id="CAB79045"/>
    </conflict>
</comment>
<sequence>MEGIHKLIFLALIWIFLITNIVDAQDQQGFISLDCGMPRNESSYTDESTGLNFSSDADFISSGKSGTIKTEDSDSGVKYIKPYKQLRYFPEGARNCYNLTVMQGTHYLIRAVFVYGNYDLKQRPKFDLYLGPNFWTTINLQDPSGGFYYRIWLQDGTVEEVIHMPKSNNLDICLVKTGTTTPFISSLELRPLRDDTYTTTTGSLKLISRWYFRKPFPTLESIIRHPDDVHDRLWDVYHADEEWTDINTTTPVNTTVNAFDLPQAIISKASIPQVASDTWSTTWSIQNPDDDVHVYLHFAEIQALKPSDTREFSILWNKNTIIRDYYSPLEFMADTVPIRTSSKCGDDGFCSLDLTRTKSSTLPPYCNAMEVFGLLQLLQTETDENDVTTLKNIQATYRIQKTNWQGDPCVPIQFIWTGLNCSNMFPSIPPRITSIDFSNFGLNGTITSDIQYLNQLQKLDLSNNNLTGKVPEFLAKMKLLTFINLSGNNLSGSIPQSLLNMEKNGLITLLYNGNNLCLDPSCESETGPGNNKKKLLVPILASAASVGIIIAVLLLVNILLLRKKKPSKASRSSMVANKRSYTYEEVAVITNNFERPLGEGGFGVVYHGNVNDNEQVAVKVLSESSAQGYKQFKAEVDLLLRVHHINLVTLVGYCDEGQHLVLIYEYMSNGNLKQHLSGENSRSPLSWENRLRIAAETAQGLEYLHIGCKPPMIHRDIKSMNILLDNNFQAKLGDFGLSRSFPVGSETHVSTNVAGSPGYLDPEYYRTNWLTEKSDVFSFGVVLLEIITSQPVIDQTREKSHIGEWVGFKLTNGDIKNIVDPSMNGDYDSSSLWKALELAMSCVSPSSSGRPNMSQVANELQECLLTENSRKGGRHDVDSKSSLEQSTSFGPEHIPDAR</sequence>
<reference key="1">
    <citation type="journal article" date="1999" name="Nature">
        <title>Sequence and analysis of chromosome 4 of the plant Arabidopsis thaliana.</title>
        <authorList>
            <person name="Mayer K.F.X."/>
            <person name="Schueller C."/>
            <person name="Wambutt R."/>
            <person name="Murphy G."/>
            <person name="Volckaert G."/>
            <person name="Pohl T."/>
            <person name="Duesterhoeft A."/>
            <person name="Stiekema W."/>
            <person name="Entian K.-D."/>
            <person name="Terryn N."/>
            <person name="Harris B."/>
            <person name="Ansorge W."/>
            <person name="Brandt P."/>
            <person name="Grivell L.A."/>
            <person name="Rieger M."/>
            <person name="Weichselgartner M."/>
            <person name="de Simone V."/>
            <person name="Obermaier B."/>
            <person name="Mache R."/>
            <person name="Mueller M."/>
            <person name="Kreis M."/>
            <person name="Delseny M."/>
            <person name="Puigdomenech P."/>
            <person name="Watson M."/>
            <person name="Schmidtheini T."/>
            <person name="Reichert B."/>
            <person name="Portetelle D."/>
            <person name="Perez-Alonso M."/>
            <person name="Boutry M."/>
            <person name="Bancroft I."/>
            <person name="Vos P."/>
            <person name="Hoheisel J."/>
            <person name="Zimmermann W."/>
            <person name="Wedler H."/>
            <person name="Ridley P."/>
            <person name="Langham S.-A."/>
            <person name="McCullagh B."/>
            <person name="Bilham L."/>
            <person name="Robben J."/>
            <person name="van der Schueren J."/>
            <person name="Grymonprez B."/>
            <person name="Chuang Y.-J."/>
            <person name="Vandenbussche F."/>
            <person name="Braeken M."/>
            <person name="Weltjens I."/>
            <person name="Voet M."/>
            <person name="Bastiaens I."/>
            <person name="Aert R."/>
            <person name="Defoor E."/>
            <person name="Weitzenegger T."/>
            <person name="Bothe G."/>
            <person name="Ramsperger U."/>
            <person name="Hilbert H."/>
            <person name="Braun M."/>
            <person name="Holzer E."/>
            <person name="Brandt A."/>
            <person name="Peters S."/>
            <person name="van Staveren M."/>
            <person name="Dirkse W."/>
            <person name="Mooijman P."/>
            <person name="Klein Lankhorst R."/>
            <person name="Rose M."/>
            <person name="Hauf J."/>
            <person name="Koetter P."/>
            <person name="Berneiser S."/>
            <person name="Hempel S."/>
            <person name="Feldpausch M."/>
            <person name="Lamberth S."/>
            <person name="Van den Daele H."/>
            <person name="De Keyser A."/>
            <person name="Buysshaert C."/>
            <person name="Gielen J."/>
            <person name="Villarroel R."/>
            <person name="De Clercq R."/>
            <person name="van Montagu M."/>
            <person name="Rogers J."/>
            <person name="Cronin A."/>
            <person name="Quail M.A."/>
            <person name="Bray-Allen S."/>
            <person name="Clark L."/>
            <person name="Doggett J."/>
            <person name="Hall S."/>
            <person name="Kay M."/>
            <person name="Lennard N."/>
            <person name="McLay K."/>
            <person name="Mayes R."/>
            <person name="Pettett A."/>
            <person name="Rajandream M.A."/>
            <person name="Lyne M."/>
            <person name="Benes V."/>
            <person name="Rechmann S."/>
            <person name="Borkova D."/>
            <person name="Bloecker H."/>
            <person name="Scharfe M."/>
            <person name="Grimm M."/>
            <person name="Loehnert T.-H."/>
            <person name="Dose S."/>
            <person name="de Haan M."/>
            <person name="Maarse A.C."/>
            <person name="Schaefer M."/>
            <person name="Mueller-Auer S."/>
            <person name="Gabel C."/>
            <person name="Fuchs M."/>
            <person name="Fartmann B."/>
            <person name="Granderath K."/>
            <person name="Dauner D."/>
            <person name="Herzl A."/>
            <person name="Neumann S."/>
            <person name="Argiriou A."/>
            <person name="Vitale D."/>
            <person name="Liguori R."/>
            <person name="Piravandi E."/>
            <person name="Massenet O."/>
            <person name="Quigley F."/>
            <person name="Clabauld G."/>
            <person name="Muendlein A."/>
            <person name="Felber R."/>
            <person name="Schnabl S."/>
            <person name="Hiller R."/>
            <person name="Schmidt W."/>
            <person name="Lecharny A."/>
            <person name="Aubourg S."/>
            <person name="Chefdor F."/>
            <person name="Cooke R."/>
            <person name="Berger C."/>
            <person name="Monfort A."/>
            <person name="Casacuberta E."/>
            <person name="Gibbons T."/>
            <person name="Weber N."/>
            <person name="Vandenbol M."/>
            <person name="Bargues M."/>
            <person name="Terol J."/>
            <person name="Torres A."/>
            <person name="Perez-Perez A."/>
            <person name="Purnelle B."/>
            <person name="Bent E."/>
            <person name="Johnson S."/>
            <person name="Tacon D."/>
            <person name="Jesse T."/>
            <person name="Heijnen L."/>
            <person name="Schwarz S."/>
            <person name="Scholler P."/>
            <person name="Heber S."/>
            <person name="Francs P."/>
            <person name="Bielke C."/>
            <person name="Frishman D."/>
            <person name="Haase D."/>
            <person name="Lemcke K."/>
            <person name="Mewes H.-W."/>
            <person name="Stocker S."/>
            <person name="Zaccaria P."/>
            <person name="Bevan M."/>
            <person name="Wilson R.K."/>
            <person name="de la Bastide M."/>
            <person name="Habermann K."/>
            <person name="Parnell L."/>
            <person name="Dedhia N."/>
            <person name="Gnoj L."/>
            <person name="Schutz K."/>
            <person name="Huang E."/>
            <person name="Spiegel L."/>
            <person name="Sekhon M."/>
            <person name="Murray J."/>
            <person name="Sheet P."/>
            <person name="Cordes M."/>
            <person name="Abu-Threideh J."/>
            <person name="Stoneking T."/>
            <person name="Kalicki J."/>
            <person name="Graves T."/>
            <person name="Harmon G."/>
            <person name="Edwards J."/>
            <person name="Latreille P."/>
            <person name="Courtney L."/>
            <person name="Cloud J."/>
            <person name="Abbott A."/>
            <person name="Scott K."/>
            <person name="Johnson D."/>
            <person name="Minx P."/>
            <person name="Bentley D."/>
            <person name="Fulton B."/>
            <person name="Miller N."/>
            <person name="Greco T."/>
            <person name="Kemp K."/>
            <person name="Kramer J."/>
            <person name="Fulton L."/>
            <person name="Mardis E."/>
            <person name="Dante M."/>
            <person name="Pepin K."/>
            <person name="Hillier L.W."/>
            <person name="Nelson J."/>
            <person name="Spieth J."/>
            <person name="Ryan E."/>
            <person name="Andrews S."/>
            <person name="Geisel C."/>
            <person name="Layman D."/>
            <person name="Du H."/>
            <person name="Ali J."/>
            <person name="Berghoff A."/>
            <person name="Jones K."/>
            <person name="Drone K."/>
            <person name="Cotton M."/>
            <person name="Joshu C."/>
            <person name="Antonoiu B."/>
            <person name="Zidanic M."/>
            <person name="Strong C."/>
            <person name="Sun H."/>
            <person name="Lamar B."/>
            <person name="Yordan C."/>
            <person name="Ma P."/>
            <person name="Zhong J."/>
            <person name="Preston R."/>
            <person name="Vil D."/>
            <person name="Shekher M."/>
            <person name="Matero A."/>
            <person name="Shah R."/>
            <person name="Swaby I.K."/>
            <person name="O'Shaughnessy A."/>
            <person name="Rodriguez M."/>
            <person name="Hoffman J."/>
            <person name="Till S."/>
            <person name="Granat S."/>
            <person name="Shohdy N."/>
            <person name="Hasegawa A."/>
            <person name="Hameed A."/>
            <person name="Lodhi M."/>
            <person name="Johnson A."/>
            <person name="Chen E."/>
            <person name="Marra M.A."/>
            <person name="Martienssen R."/>
            <person name="McCombie W.R."/>
        </authorList>
    </citation>
    <scope>NUCLEOTIDE SEQUENCE [LARGE SCALE GENOMIC DNA]</scope>
    <source>
        <strain>cv. Columbia</strain>
    </source>
</reference>
<reference key="2">
    <citation type="journal article" date="2017" name="Plant J.">
        <title>Araport11: a complete reannotation of the Arabidopsis thaliana reference genome.</title>
        <authorList>
            <person name="Cheng C.Y."/>
            <person name="Krishnakumar V."/>
            <person name="Chan A.P."/>
            <person name="Thibaud-Nissen F."/>
            <person name="Schobel S."/>
            <person name="Town C.D."/>
        </authorList>
    </citation>
    <scope>GENOME REANNOTATION</scope>
    <source>
        <strain>cv. Columbia</strain>
    </source>
</reference>
<reference key="3">
    <citation type="journal article" date="2010" name="BMC Genomics">
        <title>Genome-wide cloning and sequence analysis of leucine-rich repeat receptor-like protein kinase genes in Arabidopsis thaliana.</title>
        <authorList>
            <person name="Gou X."/>
            <person name="He K."/>
            <person name="Yang H."/>
            <person name="Yuan T."/>
            <person name="Lin H."/>
            <person name="Clouse S.D."/>
            <person name="Li J."/>
        </authorList>
    </citation>
    <scope>NUCLEOTIDE SEQUENCE [LARGE SCALE MRNA]</scope>
    <source>
        <strain>cv. Columbia</strain>
    </source>
</reference>
<accession>C0LGQ7</accession>
<accession>Q9SUN4</accession>
<protein>
    <recommendedName>
        <fullName>Probable LRR receptor-like serine/threonine-protein kinase At4g20450</fullName>
        <ecNumber>2.7.11.1</ecNumber>
    </recommendedName>
</protein>
<proteinExistence type="evidence at protein level"/>
<dbReference type="EC" id="2.7.11.1"/>
<dbReference type="EMBL" id="AL080253">
    <property type="protein sequence ID" value="CAB45811.1"/>
    <property type="status" value="ALT_SEQ"/>
    <property type="molecule type" value="Genomic_DNA"/>
</dbReference>
<dbReference type="EMBL" id="AL161553">
    <property type="protein sequence ID" value="CAB79045.1"/>
    <property type="status" value="ALT_SEQ"/>
    <property type="molecule type" value="Genomic_DNA"/>
</dbReference>
<dbReference type="EMBL" id="CP002687">
    <property type="protein sequence ID" value="AEE84334.1"/>
    <property type="molecule type" value="Genomic_DNA"/>
</dbReference>
<dbReference type="EMBL" id="FJ708748">
    <property type="protein sequence ID" value="ACN59342.1"/>
    <property type="molecule type" value="mRNA"/>
</dbReference>
<dbReference type="PIR" id="T10587">
    <property type="entry name" value="T10587"/>
</dbReference>
<dbReference type="RefSeq" id="NP_193778.2">
    <property type="nucleotide sequence ID" value="NM_118164.3"/>
</dbReference>
<dbReference type="SMR" id="C0LGQ7"/>
<dbReference type="BioGRID" id="13084">
    <property type="interactions" value="29"/>
</dbReference>
<dbReference type="IntAct" id="C0LGQ7">
    <property type="interactions" value="25"/>
</dbReference>
<dbReference type="STRING" id="3702.C0LGQ7"/>
<dbReference type="GlyGen" id="C0LGQ7">
    <property type="glycosylation" value="10 sites"/>
</dbReference>
<dbReference type="iPTMnet" id="C0LGQ7"/>
<dbReference type="PaxDb" id="3702-AT4G20450.1"/>
<dbReference type="ProteomicsDB" id="242994"/>
<dbReference type="EnsemblPlants" id="AT4G20450.1">
    <property type="protein sequence ID" value="AT4G20450.1"/>
    <property type="gene ID" value="AT4G20450"/>
</dbReference>
<dbReference type="GeneID" id="827793"/>
<dbReference type="Gramene" id="AT4G20450.1">
    <property type="protein sequence ID" value="AT4G20450.1"/>
    <property type="gene ID" value="AT4G20450"/>
</dbReference>
<dbReference type="KEGG" id="ath:AT4G20450"/>
<dbReference type="Araport" id="AT4G20450"/>
<dbReference type="TAIR" id="AT4G20450"/>
<dbReference type="eggNOG" id="ENOG502QQCZ">
    <property type="taxonomic scope" value="Eukaryota"/>
</dbReference>
<dbReference type="HOGENOM" id="CLU_000288_41_1_1"/>
<dbReference type="InParanoid" id="C0LGQ7"/>
<dbReference type="PhylomeDB" id="C0LGQ7"/>
<dbReference type="PRO" id="PR:C0LGQ7"/>
<dbReference type="Proteomes" id="UP000006548">
    <property type="component" value="Chromosome 4"/>
</dbReference>
<dbReference type="ExpressionAtlas" id="C0LGQ7">
    <property type="expression patterns" value="baseline and differential"/>
</dbReference>
<dbReference type="GO" id="GO:0016020">
    <property type="term" value="C:membrane"/>
    <property type="evidence" value="ECO:0007669"/>
    <property type="project" value="UniProtKB-SubCell"/>
</dbReference>
<dbReference type="GO" id="GO:0005524">
    <property type="term" value="F:ATP binding"/>
    <property type="evidence" value="ECO:0007669"/>
    <property type="project" value="UniProtKB-KW"/>
</dbReference>
<dbReference type="GO" id="GO:0106310">
    <property type="term" value="F:protein serine kinase activity"/>
    <property type="evidence" value="ECO:0007669"/>
    <property type="project" value="RHEA"/>
</dbReference>
<dbReference type="GO" id="GO:0004674">
    <property type="term" value="F:protein serine/threonine kinase activity"/>
    <property type="evidence" value="ECO:0007669"/>
    <property type="project" value="UniProtKB-KW"/>
</dbReference>
<dbReference type="CDD" id="cd14066">
    <property type="entry name" value="STKc_IRAK"/>
    <property type="match status" value="1"/>
</dbReference>
<dbReference type="FunFam" id="3.80.10.10:FF:000129">
    <property type="entry name" value="Leucine-rich repeat receptor-like kinase"/>
    <property type="match status" value="1"/>
</dbReference>
<dbReference type="FunFam" id="3.30.200.20:FF:000394">
    <property type="entry name" value="Leucine-rich repeat receptor-like protein kinase"/>
    <property type="match status" value="1"/>
</dbReference>
<dbReference type="FunFam" id="1.10.510.10:FF:000146">
    <property type="entry name" value="LRR receptor-like serine/threonine-protein kinase IOS1"/>
    <property type="match status" value="1"/>
</dbReference>
<dbReference type="Gene3D" id="2.60.120.430">
    <property type="entry name" value="Galactose-binding lectin"/>
    <property type="match status" value="1"/>
</dbReference>
<dbReference type="Gene3D" id="3.30.200.20">
    <property type="entry name" value="Phosphorylase Kinase, domain 1"/>
    <property type="match status" value="1"/>
</dbReference>
<dbReference type="Gene3D" id="3.80.10.10">
    <property type="entry name" value="Ribonuclease Inhibitor"/>
    <property type="match status" value="1"/>
</dbReference>
<dbReference type="Gene3D" id="1.10.510.10">
    <property type="entry name" value="Transferase(Phosphotransferase) domain 1"/>
    <property type="match status" value="1"/>
</dbReference>
<dbReference type="InterPro" id="IPR011009">
    <property type="entry name" value="Kinase-like_dom_sf"/>
</dbReference>
<dbReference type="InterPro" id="IPR001611">
    <property type="entry name" value="Leu-rich_rpt"/>
</dbReference>
<dbReference type="InterPro" id="IPR032675">
    <property type="entry name" value="LRR_dom_sf"/>
</dbReference>
<dbReference type="InterPro" id="IPR024788">
    <property type="entry name" value="Malectin-like_Carb-bd_dom"/>
</dbReference>
<dbReference type="InterPro" id="IPR000719">
    <property type="entry name" value="Prot_kinase_dom"/>
</dbReference>
<dbReference type="InterPro" id="IPR017441">
    <property type="entry name" value="Protein_kinase_ATP_BS"/>
</dbReference>
<dbReference type="InterPro" id="IPR001245">
    <property type="entry name" value="Ser-Thr/Tyr_kinase_cat_dom"/>
</dbReference>
<dbReference type="InterPro" id="IPR008271">
    <property type="entry name" value="Ser/Thr_kinase_AS"/>
</dbReference>
<dbReference type="PANTHER" id="PTHR45631">
    <property type="entry name" value="OS07G0107800 PROTEIN-RELATED"/>
    <property type="match status" value="1"/>
</dbReference>
<dbReference type="PANTHER" id="PTHR45631:SF175">
    <property type="entry name" value="PROTEIN KINASE DOMAIN-CONTAINING PROTEIN"/>
    <property type="match status" value="1"/>
</dbReference>
<dbReference type="Pfam" id="PF00560">
    <property type="entry name" value="LRR_1"/>
    <property type="match status" value="2"/>
</dbReference>
<dbReference type="Pfam" id="PF12819">
    <property type="entry name" value="Malectin_like"/>
    <property type="match status" value="1"/>
</dbReference>
<dbReference type="Pfam" id="PF07714">
    <property type="entry name" value="PK_Tyr_Ser-Thr"/>
    <property type="match status" value="1"/>
</dbReference>
<dbReference type="SMART" id="SM00220">
    <property type="entry name" value="S_TKc"/>
    <property type="match status" value="1"/>
</dbReference>
<dbReference type="SUPFAM" id="SSF52058">
    <property type="entry name" value="L domain-like"/>
    <property type="match status" value="1"/>
</dbReference>
<dbReference type="SUPFAM" id="SSF56112">
    <property type="entry name" value="Protein kinase-like (PK-like)"/>
    <property type="match status" value="1"/>
</dbReference>
<dbReference type="PROSITE" id="PS00107">
    <property type="entry name" value="PROTEIN_KINASE_ATP"/>
    <property type="match status" value="1"/>
</dbReference>
<dbReference type="PROSITE" id="PS50011">
    <property type="entry name" value="PROTEIN_KINASE_DOM"/>
    <property type="match status" value="1"/>
</dbReference>
<dbReference type="PROSITE" id="PS00108">
    <property type="entry name" value="PROTEIN_KINASE_ST"/>
    <property type="match status" value="1"/>
</dbReference>
<name>Y4245_ARATH</name>
<keyword id="KW-0067">ATP-binding</keyword>
<keyword id="KW-0325">Glycoprotein</keyword>
<keyword id="KW-0418">Kinase</keyword>
<keyword id="KW-0433">Leucine-rich repeat</keyword>
<keyword id="KW-0472">Membrane</keyword>
<keyword id="KW-0547">Nucleotide-binding</keyword>
<keyword id="KW-0597">Phosphoprotein</keyword>
<keyword id="KW-0675">Receptor</keyword>
<keyword id="KW-1185">Reference proteome</keyword>
<keyword id="KW-0677">Repeat</keyword>
<keyword id="KW-0723">Serine/threonine-protein kinase</keyword>
<keyword id="KW-0732">Signal</keyword>
<keyword id="KW-0808">Transferase</keyword>
<keyword id="KW-0812">Transmembrane</keyword>
<keyword id="KW-1133">Transmembrane helix</keyword>
<gene>
    <name type="ordered locus">At4g20450</name>
    <name type="ORF">F9F13.100</name>
</gene>
<feature type="signal peptide" evidence="2">
    <location>
        <begin position="1"/>
        <end position="24"/>
    </location>
</feature>
<feature type="chain" id="PRO_0000387552" description="Probable LRR receptor-like serine/threonine-protein kinase At4g20450">
    <location>
        <begin position="25"/>
        <end position="898"/>
    </location>
</feature>
<feature type="topological domain" description="Extracellular" evidence="2">
    <location>
        <begin position="25"/>
        <end position="535"/>
    </location>
</feature>
<feature type="transmembrane region" description="Helical" evidence="2">
    <location>
        <begin position="536"/>
        <end position="556"/>
    </location>
</feature>
<feature type="topological domain" description="Cytoplasmic" evidence="2">
    <location>
        <begin position="557"/>
        <end position="898"/>
    </location>
</feature>
<feature type="repeat" description="LRR 1">
    <location>
        <begin position="455"/>
        <end position="477"/>
    </location>
</feature>
<feature type="repeat" description="LRR 2">
    <location>
        <begin position="479"/>
        <end position="501"/>
    </location>
</feature>
<feature type="repeat" description="LRR 3">
    <location>
        <begin position="505"/>
        <end position="526"/>
    </location>
</feature>
<feature type="domain" description="Protein kinase" evidence="3">
    <location>
        <begin position="591"/>
        <end position="864"/>
    </location>
</feature>
<feature type="region of interest" description="Disordered" evidence="5">
    <location>
        <begin position="864"/>
        <end position="898"/>
    </location>
</feature>
<feature type="compositionally biased region" description="Basic and acidic residues" evidence="5">
    <location>
        <begin position="868"/>
        <end position="881"/>
    </location>
</feature>
<feature type="active site" description="Proton acceptor" evidence="3 4">
    <location>
        <position position="716"/>
    </location>
</feature>
<feature type="binding site" evidence="3">
    <location>
        <begin position="597"/>
        <end position="605"/>
    </location>
    <ligand>
        <name>ATP</name>
        <dbReference type="ChEBI" id="CHEBI:30616"/>
    </ligand>
</feature>
<feature type="binding site" evidence="3">
    <location>
        <position position="619"/>
    </location>
    <ligand>
        <name>ATP</name>
        <dbReference type="ChEBI" id="CHEBI:30616"/>
    </ligand>
</feature>
<feature type="modified residue" description="Phosphothreonine" evidence="1">
    <location>
        <position position="582"/>
    </location>
</feature>
<feature type="modified residue" description="Phosphotyrosine" evidence="1">
    <location>
        <position position="664"/>
    </location>
</feature>
<feature type="modified residue" description="Phosphoserine" evidence="1">
    <location>
        <position position="750"/>
    </location>
</feature>
<feature type="modified residue" description="Phosphothreonine" evidence="1">
    <location>
        <position position="751"/>
    </location>
</feature>
<feature type="modified residue" description="Phosphotyrosine" evidence="1">
    <location>
        <position position="764"/>
    </location>
</feature>
<feature type="glycosylation site" description="N-linked (GlcNAc...) asparagine" evidence="2">
    <location>
        <position position="40"/>
    </location>
</feature>
<feature type="glycosylation site" description="N-linked (GlcNAc...) asparagine" evidence="2">
    <location>
        <position position="52"/>
    </location>
</feature>
<feature type="glycosylation site" description="N-linked (GlcNAc...) asparagine" evidence="2">
    <location>
        <position position="98"/>
    </location>
</feature>
<feature type="glycosylation site" description="N-linked (GlcNAc...) asparagine" evidence="2">
    <location>
        <position position="247"/>
    </location>
</feature>
<feature type="glycosylation site" description="N-linked (GlcNAc...) asparagine" evidence="2">
    <location>
        <position position="253"/>
    </location>
</feature>
<feature type="glycosylation site" description="N-linked (GlcNAc...) asparagine" evidence="2">
    <location>
        <position position="420"/>
    </location>
</feature>
<feature type="glycosylation site" description="N-linked (GlcNAc...) asparagine" evidence="2">
    <location>
        <position position="443"/>
    </location>
</feature>
<feature type="glycosylation site" description="N-linked (GlcNAc...) asparagine" evidence="2">
    <location>
        <position position="465"/>
    </location>
</feature>
<feature type="glycosylation site" description="N-linked (GlcNAc...) asparagine" evidence="2">
    <location>
        <position position="484"/>
    </location>
</feature>
<feature type="glycosylation site" description="N-linked (GlcNAc...) asparagine" evidence="2">
    <location>
        <position position="489"/>
    </location>
</feature>